<gene>
    <name evidence="1" type="primary">rpmB</name>
    <name type="ordered locus">PA5316</name>
</gene>
<accession>Q9HTN8</accession>
<name>RL28_PSEAE</name>
<proteinExistence type="evidence at protein level"/>
<sequence length="78" mass="9066">MSRVCQVTGKGPVTGNNISHAHNKTRRRFLPNLQHHRFWVESEKRFVRLRVSAKGMRIIDKRGIEAVLADLRARGEKF</sequence>
<protein>
    <recommendedName>
        <fullName evidence="1">Large ribosomal subunit protein bL28</fullName>
    </recommendedName>
    <alternativeName>
        <fullName evidence="2">50S ribosomal protein L28</fullName>
    </alternativeName>
</protein>
<keyword id="KW-0002">3D-structure</keyword>
<keyword id="KW-1185">Reference proteome</keyword>
<keyword id="KW-0687">Ribonucleoprotein</keyword>
<keyword id="KW-0689">Ribosomal protein</keyword>
<feature type="chain" id="PRO_0000178531" description="Large ribosomal subunit protein bL28">
    <location>
        <begin position="1"/>
        <end position="78"/>
    </location>
</feature>
<evidence type="ECO:0000255" key="1">
    <source>
        <dbReference type="HAMAP-Rule" id="MF_00373"/>
    </source>
</evidence>
<evidence type="ECO:0000305" key="2"/>
<organism>
    <name type="scientific">Pseudomonas aeruginosa (strain ATCC 15692 / DSM 22644 / CIP 104116 / JCM 14847 / LMG 12228 / 1C / PRS 101 / PAO1)</name>
    <dbReference type="NCBI Taxonomy" id="208964"/>
    <lineage>
        <taxon>Bacteria</taxon>
        <taxon>Pseudomonadati</taxon>
        <taxon>Pseudomonadota</taxon>
        <taxon>Gammaproteobacteria</taxon>
        <taxon>Pseudomonadales</taxon>
        <taxon>Pseudomonadaceae</taxon>
        <taxon>Pseudomonas</taxon>
    </lineage>
</organism>
<comment type="similarity">
    <text evidence="1">Belongs to the bacterial ribosomal protein bL28 family.</text>
</comment>
<reference key="1">
    <citation type="journal article" date="2000" name="Nature">
        <title>Complete genome sequence of Pseudomonas aeruginosa PAO1, an opportunistic pathogen.</title>
        <authorList>
            <person name="Stover C.K."/>
            <person name="Pham X.-Q.T."/>
            <person name="Erwin A.L."/>
            <person name="Mizoguchi S.D."/>
            <person name="Warrener P."/>
            <person name="Hickey M.J."/>
            <person name="Brinkman F.S.L."/>
            <person name="Hufnagle W.O."/>
            <person name="Kowalik D.J."/>
            <person name="Lagrou M."/>
            <person name="Garber R.L."/>
            <person name="Goltry L."/>
            <person name="Tolentino E."/>
            <person name="Westbrock-Wadman S."/>
            <person name="Yuan Y."/>
            <person name="Brody L.L."/>
            <person name="Coulter S.N."/>
            <person name="Folger K.R."/>
            <person name="Kas A."/>
            <person name="Larbig K."/>
            <person name="Lim R.M."/>
            <person name="Smith K.A."/>
            <person name="Spencer D.H."/>
            <person name="Wong G.K.-S."/>
            <person name="Wu Z."/>
            <person name="Paulsen I.T."/>
            <person name="Reizer J."/>
            <person name="Saier M.H. Jr."/>
            <person name="Hancock R.E.W."/>
            <person name="Lory S."/>
            <person name="Olson M.V."/>
        </authorList>
    </citation>
    <scope>NUCLEOTIDE SEQUENCE [LARGE SCALE GENOMIC DNA]</scope>
    <source>
        <strain>ATCC 15692 / DSM 22644 / CIP 104116 / JCM 14847 / LMG 12228 / 1C / PRS 101 / PAO1</strain>
    </source>
</reference>
<dbReference type="EMBL" id="AE004091">
    <property type="protein sequence ID" value="AAG08701.1"/>
    <property type="molecule type" value="Genomic_DNA"/>
</dbReference>
<dbReference type="PIR" id="F82981">
    <property type="entry name" value="F82981"/>
</dbReference>
<dbReference type="RefSeq" id="NP_254003.1">
    <property type="nucleotide sequence ID" value="NC_002516.2"/>
</dbReference>
<dbReference type="RefSeq" id="WP_003096556.1">
    <property type="nucleotide sequence ID" value="NZ_QZGE01000020.1"/>
</dbReference>
<dbReference type="PDB" id="7UNR">
    <property type="method" value="EM"/>
    <property type="resolution" value="2.90 A"/>
    <property type="chains" value="Z=1-78"/>
</dbReference>
<dbReference type="PDB" id="7UNU">
    <property type="method" value="EM"/>
    <property type="resolution" value="2.90 A"/>
    <property type="chains" value="Z=1-78"/>
</dbReference>
<dbReference type="PDB" id="7UNV">
    <property type="method" value="EM"/>
    <property type="resolution" value="2.70 A"/>
    <property type="chains" value="Z=1-78"/>
</dbReference>
<dbReference type="PDB" id="7UNW">
    <property type="method" value="EM"/>
    <property type="resolution" value="2.60 A"/>
    <property type="chains" value="Z=1-78"/>
</dbReference>
<dbReference type="PDB" id="8CD1">
    <property type="method" value="EM"/>
    <property type="resolution" value="3.00 A"/>
    <property type="chains" value="X=1-78"/>
</dbReference>
<dbReference type="PDB" id="8RWG">
    <property type="method" value="EM"/>
    <property type="resolution" value="2.46 A"/>
    <property type="chains" value="2=1-78"/>
</dbReference>
<dbReference type="PDBsum" id="7UNR"/>
<dbReference type="PDBsum" id="7UNU"/>
<dbReference type="PDBsum" id="7UNV"/>
<dbReference type="PDBsum" id="7UNW"/>
<dbReference type="PDBsum" id="8CD1"/>
<dbReference type="PDBsum" id="8RWG"/>
<dbReference type="EMDB" id="EMD-16566"/>
<dbReference type="EMDB" id="EMD-19547"/>
<dbReference type="EMDB" id="EMD-26630"/>
<dbReference type="EMDB" id="EMD-26633"/>
<dbReference type="EMDB" id="EMD-26634"/>
<dbReference type="EMDB" id="EMD-26635"/>
<dbReference type="SMR" id="Q9HTN8"/>
<dbReference type="FunCoup" id="Q9HTN8">
    <property type="interactions" value="603"/>
</dbReference>
<dbReference type="STRING" id="208964.PA5316"/>
<dbReference type="PaxDb" id="208964-PA5316"/>
<dbReference type="DNASU" id="880891"/>
<dbReference type="GeneID" id="77223849"/>
<dbReference type="GeneID" id="880891"/>
<dbReference type="KEGG" id="pae:PA5316"/>
<dbReference type="PATRIC" id="fig|208964.12.peg.5571"/>
<dbReference type="PseudoCAP" id="PA5316"/>
<dbReference type="HOGENOM" id="CLU_064548_3_1_6"/>
<dbReference type="InParanoid" id="Q9HTN8"/>
<dbReference type="OrthoDB" id="9805609at2"/>
<dbReference type="PhylomeDB" id="Q9HTN8"/>
<dbReference type="BioCyc" id="PAER208964:G1FZ6-5437-MONOMER"/>
<dbReference type="PRO" id="PR:Q9HTN8"/>
<dbReference type="Proteomes" id="UP000002438">
    <property type="component" value="Chromosome"/>
</dbReference>
<dbReference type="GO" id="GO:0022625">
    <property type="term" value="C:cytosolic large ribosomal subunit"/>
    <property type="evidence" value="ECO:0000318"/>
    <property type="project" value="GO_Central"/>
</dbReference>
<dbReference type="GO" id="GO:0003735">
    <property type="term" value="F:structural constituent of ribosome"/>
    <property type="evidence" value="ECO:0000318"/>
    <property type="project" value="GO_Central"/>
</dbReference>
<dbReference type="GO" id="GO:0006412">
    <property type="term" value="P:translation"/>
    <property type="evidence" value="ECO:0007669"/>
    <property type="project" value="UniProtKB-UniRule"/>
</dbReference>
<dbReference type="FunFam" id="2.30.170.40:FF:000001">
    <property type="entry name" value="50S ribosomal protein L28"/>
    <property type="match status" value="1"/>
</dbReference>
<dbReference type="Gene3D" id="2.30.170.40">
    <property type="entry name" value="Ribosomal protein L28/L24"/>
    <property type="match status" value="1"/>
</dbReference>
<dbReference type="HAMAP" id="MF_00373">
    <property type="entry name" value="Ribosomal_bL28"/>
    <property type="match status" value="1"/>
</dbReference>
<dbReference type="InterPro" id="IPR026569">
    <property type="entry name" value="Ribosomal_bL28"/>
</dbReference>
<dbReference type="InterPro" id="IPR034704">
    <property type="entry name" value="Ribosomal_bL28/bL31-like_sf"/>
</dbReference>
<dbReference type="InterPro" id="IPR001383">
    <property type="entry name" value="Ribosomal_bL28_bact-type"/>
</dbReference>
<dbReference type="InterPro" id="IPR037147">
    <property type="entry name" value="Ribosomal_bL28_sf"/>
</dbReference>
<dbReference type="NCBIfam" id="TIGR00009">
    <property type="entry name" value="L28"/>
    <property type="match status" value="1"/>
</dbReference>
<dbReference type="PANTHER" id="PTHR13528">
    <property type="entry name" value="39S RIBOSOMAL PROTEIN L28, MITOCHONDRIAL"/>
    <property type="match status" value="1"/>
</dbReference>
<dbReference type="PANTHER" id="PTHR13528:SF2">
    <property type="entry name" value="LARGE RIBOSOMAL SUBUNIT PROTEIN BL28M"/>
    <property type="match status" value="1"/>
</dbReference>
<dbReference type="Pfam" id="PF00830">
    <property type="entry name" value="Ribosomal_L28"/>
    <property type="match status" value="1"/>
</dbReference>
<dbReference type="SUPFAM" id="SSF143800">
    <property type="entry name" value="L28p-like"/>
    <property type="match status" value="1"/>
</dbReference>